<proteinExistence type="inferred from homology"/>
<geneLocation type="chloroplast"/>
<organism>
    <name type="scientific">Platanus occidentalis</name>
    <name type="common">Sycamore</name>
    <name type="synonym">American plane tree</name>
    <dbReference type="NCBI Taxonomy" id="4403"/>
    <lineage>
        <taxon>Eukaryota</taxon>
        <taxon>Viridiplantae</taxon>
        <taxon>Streptophyta</taxon>
        <taxon>Embryophyta</taxon>
        <taxon>Tracheophyta</taxon>
        <taxon>Spermatophyta</taxon>
        <taxon>Magnoliopsida</taxon>
        <taxon>Proteales</taxon>
        <taxon>Platanaceae</taxon>
        <taxon>Platanus</taxon>
    </lineage>
</organism>
<protein>
    <recommendedName>
        <fullName>NAD(P)H-quinone oxidoreductase subunit 5, chloroplastic</fullName>
        <ecNumber>7.1.1.-</ecNumber>
    </recommendedName>
    <alternativeName>
        <fullName>NAD(P)H dehydrogenase subunit 5</fullName>
    </alternativeName>
    <alternativeName>
        <fullName>NADH-plastoquinone oxidoreductase subunit 5</fullName>
    </alternativeName>
</protein>
<feature type="chain" id="PRO_0000360967" description="NAD(P)H-quinone oxidoreductase subunit 5, chloroplastic">
    <location>
        <begin position="1"/>
        <end position="748"/>
    </location>
</feature>
<feature type="transmembrane region" description="Helical" evidence="2">
    <location>
        <begin position="9"/>
        <end position="29"/>
    </location>
</feature>
<feature type="transmembrane region" description="Helical" evidence="2">
    <location>
        <begin position="40"/>
        <end position="60"/>
    </location>
</feature>
<feature type="transmembrane region" description="Helical" evidence="2">
    <location>
        <begin position="89"/>
        <end position="109"/>
    </location>
</feature>
<feature type="transmembrane region" description="Helical" evidence="2">
    <location>
        <begin position="121"/>
        <end position="140"/>
    </location>
</feature>
<feature type="transmembrane region" description="Helical" evidence="2">
    <location>
        <begin position="147"/>
        <end position="167"/>
    </location>
</feature>
<feature type="transmembrane region" description="Helical" evidence="2">
    <location>
        <begin position="185"/>
        <end position="205"/>
    </location>
</feature>
<feature type="transmembrane region" description="Helical" evidence="2">
    <location>
        <begin position="224"/>
        <end position="244"/>
    </location>
</feature>
<feature type="transmembrane region" description="Helical" evidence="2">
    <location>
        <begin position="258"/>
        <end position="278"/>
    </location>
</feature>
<feature type="transmembrane region" description="Helical" evidence="2">
    <location>
        <begin position="280"/>
        <end position="300"/>
    </location>
</feature>
<feature type="transmembrane region" description="Helical" evidence="2">
    <location>
        <begin position="327"/>
        <end position="347"/>
    </location>
</feature>
<feature type="transmembrane region" description="Helical" evidence="2">
    <location>
        <begin position="354"/>
        <end position="374"/>
    </location>
</feature>
<feature type="transmembrane region" description="Helical" evidence="2">
    <location>
        <begin position="396"/>
        <end position="416"/>
    </location>
</feature>
<feature type="transmembrane region" description="Helical" evidence="2">
    <location>
        <begin position="425"/>
        <end position="445"/>
    </location>
</feature>
<feature type="transmembrane region" description="Helical" evidence="2">
    <location>
        <begin position="551"/>
        <end position="571"/>
    </location>
</feature>
<feature type="transmembrane region" description="Helical" evidence="2">
    <location>
        <begin position="605"/>
        <end position="625"/>
    </location>
</feature>
<feature type="transmembrane region" description="Helical" evidence="2">
    <location>
        <begin position="726"/>
        <end position="746"/>
    </location>
</feature>
<gene>
    <name type="primary">ndhF</name>
</gene>
<name>NU5C_PLAOC</name>
<keyword id="KW-0150">Chloroplast</keyword>
<keyword id="KW-0472">Membrane</keyword>
<keyword id="KW-0520">NAD</keyword>
<keyword id="KW-0521">NADP</keyword>
<keyword id="KW-0934">Plastid</keyword>
<keyword id="KW-0618">Plastoquinone</keyword>
<keyword id="KW-0874">Quinone</keyword>
<keyword id="KW-0793">Thylakoid</keyword>
<keyword id="KW-1278">Translocase</keyword>
<keyword id="KW-0812">Transmembrane</keyword>
<keyword id="KW-1133">Transmembrane helix</keyword>
<keyword id="KW-0813">Transport</keyword>
<dbReference type="EC" id="7.1.1.-"/>
<dbReference type="EMBL" id="DQ923116">
    <property type="protein sequence ID" value="ABI49826.1"/>
    <property type="molecule type" value="Genomic_DNA"/>
</dbReference>
<dbReference type="RefSeq" id="YP_740612.1">
    <property type="nucleotide sequence ID" value="NC_008335.1"/>
</dbReference>
<dbReference type="SMR" id="Q09FZ9"/>
<dbReference type="GeneID" id="4271322"/>
<dbReference type="GO" id="GO:0009535">
    <property type="term" value="C:chloroplast thylakoid membrane"/>
    <property type="evidence" value="ECO:0007669"/>
    <property type="project" value="UniProtKB-SubCell"/>
</dbReference>
<dbReference type="GO" id="GO:0008137">
    <property type="term" value="F:NADH dehydrogenase (ubiquinone) activity"/>
    <property type="evidence" value="ECO:0007669"/>
    <property type="project" value="InterPro"/>
</dbReference>
<dbReference type="GO" id="GO:0048038">
    <property type="term" value="F:quinone binding"/>
    <property type="evidence" value="ECO:0007669"/>
    <property type="project" value="UniProtKB-KW"/>
</dbReference>
<dbReference type="GO" id="GO:0042773">
    <property type="term" value="P:ATP synthesis coupled electron transport"/>
    <property type="evidence" value="ECO:0007669"/>
    <property type="project" value="InterPro"/>
</dbReference>
<dbReference type="GO" id="GO:0015990">
    <property type="term" value="P:electron transport coupled proton transport"/>
    <property type="evidence" value="ECO:0007669"/>
    <property type="project" value="TreeGrafter"/>
</dbReference>
<dbReference type="Gene3D" id="1.20.5.2700">
    <property type="match status" value="1"/>
</dbReference>
<dbReference type="InterPro" id="IPR002128">
    <property type="entry name" value="NADH_UbQ_OxRdtase_chlpt_su5_C"/>
</dbReference>
<dbReference type="InterPro" id="IPR018393">
    <property type="entry name" value="NADHpl_OxRdtase_5_subgr"/>
</dbReference>
<dbReference type="InterPro" id="IPR001750">
    <property type="entry name" value="ND/Mrp_TM"/>
</dbReference>
<dbReference type="InterPro" id="IPR003945">
    <property type="entry name" value="NU5C-like"/>
</dbReference>
<dbReference type="InterPro" id="IPR001516">
    <property type="entry name" value="Proton_antipo_N"/>
</dbReference>
<dbReference type="NCBIfam" id="TIGR01974">
    <property type="entry name" value="NDH_I_L"/>
    <property type="match status" value="1"/>
</dbReference>
<dbReference type="NCBIfam" id="NF005141">
    <property type="entry name" value="PRK06590.1"/>
    <property type="match status" value="1"/>
</dbReference>
<dbReference type="PANTHER" id="PTHR42829">
    <property type="entry name" value="NADH-UBIQUINONE OXIDOREDUCTASE CHAIN 5"/>
    <property type="match status" value="1"/>
</dbReference>
<dbReference type="PANTHER" id="PTHR42829:SF2">
    <property type="entry name" value="NADH-UBIQUINONE OXIDOREDUCTASE CHAIN 5"/>
    <property type="match status" value="1"/>
</dbReference>
<dbReference type="Pfam" id="PF01010">
    <property type="entry name" value="Proton_antipo_C"/>
    <property type="match status" value="1"/>
</dbReference>
<dbReference type="Pfam" id="PF00361">
    <property type="entry name" value="Proton_antipo_M"/>
    <property type="match status" value="1"/>
</dbReference>
<dbReference type="Pfam" id="PF00662">
    <property type="entry name" value="Proton_antipo_N"/>
    <property type="match status" value="1"/>
</dbReference>
<dbReference type="PRINTS" id="PR01434">
    <property type="entry name" value="NADHDHGNASE5"/>
</dbReference>
<dbReference type="PRINTS" id="PR01435">
    <property type="entry name" value="NPOXDRDTASE5"/>
</dbReference>
<accession>Q09FZ9</accession>
<comment type="function">
    <text evidence="1">NDH shuttles electrons from NAD(P)H:plastoquinone, via FMN and iron-sulfur (Fe-S) centers, to quinones in the photosynthetic chain and possibly in a chloroplast respiratory chain. The immediate electron acceptor for the enzyme in this species is believed to be plastoquinone. Couples the redox reaction to proton translocation, and thus conserves the redox energy in a proton gradient (By similarity).</text>
</comment>
<comment type="catalytic activity">
    <reaction>
        <text>a plastoquinone + NADH + (n+1) H(+)(in) = a plastoquinol + NAD(+) + n H(+)(out)</text>
        <dbReference type="Rhea" id="RHEA:42608"/>
        <dbReference type="Rhea" id="RHEA-COMP:9561"/>
        <dbReference type="Rhea" id="RHEA-COMP:9562"/>
        <dbReference type="ChEBI" id="CHEBI:15378"/>
        <dbReference type="ChEBI" id="CHEBI:17757"/>
        <dbReference type="ChEBI" id="CHEBI:57540"/>
        <dbReference type="ChEBI" id="CHEBI:57945"/>
        <dbReference type="ChEBI" id="CHEBI:62192"/>
    </reaction>
</comment>
<comment type="catalytic activity">
    <reaction>
        <text>a plastoquinone + NADPH + (n+1) H(+)(in) = a plastoquinol + NADP(+) + n H(+)(out)</text>
        <dbReference type="Rhea" id="RHEA:42612"/>
        <dbReference type="Rhea" id="RHEA-COMP:9561"/>
        <dbReference type="Rhea" id="RHEA-COMP:9562"/>
        <dbReference type="ChEBI" id="CHEBI:15378"/>
        <dbReference type="ChEBI" id="CHEBI:17757"/>
        <dbReference type="ChEBI" id="CHEBI:57783"/>
        <dbReference type="ChEBI" id="CHEBI:58349"/>
        <dbReference type="ChEBI" id="CHEBI:62192"/>
    </reaction>
</comment>
<comment type="subunit">
    <text evidence="1">NDH is composed of at least 16 different subunits, 5 of which are encoded in the nucleus.</text>
</comment>
<comment type="subcellular location">
    <subcellularLocation>
        <location evidence="1">Plastid</location>
        <location evidence="1">Chloroplast thylakoid membrane</location>
        <topology evidence="1">Multi-pass membrane protein</topology>
    </subcellularLocation>
</comment>
<comment type="similarity">
    <text evidence="3">Belongs to the complex I subunit 5 family.</text>
</comment>
<evidence type="ECO:0000250" key="1"/>
<evidence type="ECO:0000255" key="2"/>
<evidence type="ECO:0000305" key="3"/>
<sequence length="748" mass="84598">MEHTYQYAWIIPFLPLPVPMLIGVGLLLVPRATKNLRRMWAFPSVLLLSIVMIFSADLSIQQLNGSSIYQYVWSWTINNDFSLEFGYLIDPLTSIMSILITTVGIMVLVYSDNYMSHDQGYLRFFAYMSFSNTSMLGLVTSSNLIQIYIFWELVGMCSYLLIGFWFTRPIAANACQKAFVTNRVGDFGLLLGILGLYWITGSFEFRDLFEIFNNLIYNNRVNSLFVTLCASLLFVGAVAKSAQFPLHIWLPDAMEGPTPISALIHAATMVAAGIFLVARLFPLFTVIPYIMNLISLIGIITVLLGATLALAQKDIKRSLAYSTMSQLGYTMLALGMGSYRAALFHLITHAYSKALLFLGSGSIIHSMETVVGYSPEKSQNMALMGGLTKYAPITKTAFLLGTLSLCGIPPLACFWSKDEILNDSWLYSPIFAIIACSTAGLTAFYMFRMYLLTFEGHLNVHFQNYSGKKNSSFYSISIWGKKETKTINIRKYFCLSTLSTMNDNEKDSYFLKKGYPIHGNVRSMARPLITISHFGNKETFPYPHESDNTMLLPLLVLVLFTLFVGFIGIPFDQEGMDLDILSKWLAPSINLLHPNLSNSVDWYEFITNAIFSVSIAYFGIFIASLLYRPVYSSFQNLELINFFVKMGPNRILWDQLLNIIYNWSYNRGYIDFFYAKTFIRGIRGLAELTHFFDRRVIDGITNGVGVTSFFVGEGIKYVGGGRISSYLFLYLSYVLIFLLISYFLFLNL</sequence>
<reference key="1">
    <citation type="journal article" date="2006" name="BMC Plant Biol.">
        <title>Rapid and accurate pyrosequencing of angiosperm plastid genomes.</title>
        <authorList>
            <person name="Moore M.J."/>
            <person name="Dhingra A."/>
            <person name="Soltis P.S."/>
            <person name="Shaw R."/>
            <person name="Farmerie W.G."/>
            <person name="Folta K.M."/>
            <person name="Soltis D.E."/>
        </authorList>
    </citation>
    <scope>NUCLEOTIDE SEQUENCE [LARGE SCALE GENOMIC DNA]</scope>
</reference>